<organism>
    <name type="scientific">Streptomyces scabiei</name>
    <dbReference type="NCBI Taxonomy" id="1930"/>
    <lineage>
        <taxon>Bacteria</taxon>
        <taxon>Bacillati</taxon>
        <taxon>Actinomycetota</taxon>
        <taxon>Actinomycetes</taxon>
        <taxon>Kitasatosporales</taxon>
        <taxon>Streptomycetaceae</taxon>
        <taxon>Streptomyces</taxon>
    </lineage>
</organism>
<name>RL15_STRSC</name>
<comment type="function">
    <text evidence="1">Binds to the 23S rRNA.</text>
</comment>
<comment type="subunit">
    <text evidence="1">Part of the 50S ribosomal subunit.</text>
</comment>
<comment type="similarity">
    <text evidence="2">Belongs to the universal ribosomal protein uL15 family.</text>
</comment>
<accession>P43415</accession>
<feature type="chain" id="PRO_0000104834" description="Large ribosomal subunit protein uL15">
    <location>
        <begin position="1" status="less than"/>
        <end position="96"/>
    </location>
</feature>
<feature type="non-terminal residue">
    <location>
        <position position="1"/>
    </location>
</feature>
<reference key="1">
    <citation type="journal article" date="1995" name="Gene">
        <title>Cloning and sequencing of a secY homolog from Streptomyces scabies.</title>
        <authorList>
            <person name="Hale V.A."/>
            <person name="O'Brien I."/>
            <person name="Schottel J.L."/>
        </authorList>
    </citation>
    <scope>NUCLEOTIDE SEQUENCE [GENOMIC DNA]</scope>
    <source>
        <strain>FL1</strain>
    </source>
</reference>
<dbReference type="EMBL" id="U19606">
    <property type="protein sequence ID" value="AAA85556.1"/>
    <property type="molecule type" value="Genomic_DNA"/>
</dbReference>
<dbReference type="PIR" id="PC4086">
    <property type="entry name" value="PC4086"/>
</dbReference>
<dbReference type="SMR" id="P43415"/>
<dbReference type="GO" id="GO:0022625">
    <property type="term" value="C:cytosolic large ribosomal subunit"/>
    <property type="evidence" value="ECO:0007669"/>
    <property type="project" value="TreeGrafter"/>
</dbReference>
<dbReference type="GO" id="GO:0019843">
    <property type="term" value="F:rRNA binding"/>
    <property type="evidence" value="ECO:0007669"/>
    <property type="project" value="UniProtKB-KW"/>
</dbReference>
<dbReference type="GO" id="GO:0003735">
    <property type="term" value="F:structural constituent of ribosome"/>
    <property type="evidence" value="ECO:0007669"/>
    <property type="project" value="InterPro"/>
</dbReference>
<dbReference type="GO" id="GO:0006412">
    <property type="term" value="P:translation"/>
    <property type="evidence" value="ECO:0007669"/>
    <property type="project" value="InterPro"/>
</dbReference>
<dbReference type="FunFam" id="3.100.10.10:FF:000005">
    <property type="entry name" value="50S ribosomal protein L15"/>
    <property type="match status" value="1"/>
</dbReference>
<dbReference type="Gene3D" id="3.100.10.10">
    <property type="match status" value="1"/>
</dbReference>
<dbReference type="InterPro" id="IPR021131">
    <property type="entry name" value="Ribosomal_uL15/eL18"/>
</dbReference>
<dbReference type="InterPro" id="IPR036227">
    <property type="entry name" value="Ribosomal_uL15/eL18_sf"/>
</dbReference>
<dbReference type="InterPro" id="IPR005749">
    <property type="entry name" value="Ribosomal_uL15_bac-type"/>
</dbReference>
<dbReference type="InterPro" id="IPR001196">
    <property type="entry name" value="Ribosomal_uL15_CS"/>
</dbReference>
<dbReference type="NCBIfam" id="TIGR01071">
    <property type="entry name" value="rplO_bact"/>
    <property type="match status" value="1"/>
</dbReference>
<dbReference type="PANTHER" id="PTHR12934">
    <property type="entry name" value="50S RIBOSOMAL PROTEIN L15"/>
    <property type="match status" value="1"/>
</dbReference>
<dbReference type="PANTHER" id="PTHR12934:SF11">
    <property type="entry name" value="LARGE RIBOSOMAL SUBUNIT PROTEIN UL15M"/>
    <property type="match status" value="1"/>
</dbReference>
<dbReference type="Pfam" id="PF00828">
    <property type="entry name" value="Ribosomal_L27A"/>
    <property type="match status" value="1"/>
</dbReference>
<dbReference type="SUPFAM" id="SSF52080">
    <property type="entry name" value="Ribosomal proteins L15p and L18e"/>
    <property type="match status" value="1"/>
</dbReference>
<dbReference type="PROSITE" id="PS00475">
    <property type="entry name" value="RIBOSOMAL_L15"/>
    <property type="match status" value="1"/>
</dbReference>
<sequence length="96" mass="10075">GQMPLHMRLPKLKGFKNPFKTEFQVVNLDKLAALYPEGGEVTVADLVAKGAVRKNSLVKVLGQGEISVALQVTVDAVSGSAKEKITAAGGTVTELV</sequence>
<protein>
    <recommendedName>
        <fullName evidence="2">Large ribosomal subunit protein uL15</fullName>
    </recommendedName>
    <alternativeName>
        <fullName>50S ribosomal protein L15</fullName>
    </alternativeName>
</protein>
<proteinExistence type="inferred from homology"/>
<evidence type="ECO:0000250" key="1"/>
<evidence type="ECO:0000305" key="2"/>
<keyword id="KW-0687">Ribonucleoprotein</keyword>
<keyword id="KW-0689">Ribosomal protein</keyword>
<keyword id="KW-0694">RNA-binding</keyword>
<keyword id="KW-0699">rRNA-binding</keyword>
<gene>
    <name type="primary">rplO</name>
</gene>